<feature type="chain" id="PRO_0000234466" description="Unknown protein from spot 103 of 2D-PAGE of thylakoid">
    <location>
        <begin position="1"/>
        <end position="14" status="greater than"/>
    </location>
</feature>
<feature type="non-terminal residue" evidence="2">
    <location>
        <position position="14"/>
    </location>
</feature>
<name>UT103_PEA</name>
<reference evidence="3" key="1">
    <citation type="journal article" date="2000" name="Plant Cell">
        <title>Proteomics of the chloroplast: systematic identification and targeting analysis of lumenal and peripheral thylakoid proteins.</title>
        <authorList>
            <person name="Peltier J.-B."/>
            <person name="Friso G."/>
            <person name="Kalume D.E."/>
            <person name="Roepstorff P."/>
            <person name="Nilsson F."/>
            <person name="Adamska I."/>
            <person name="van Wijk K.J."/>
        </authorList>
    </citation>
    <scope>PROTEIN SEQUENCE</scope>
    <scope>SUBCELLULAR LOCATION</scope>
    <source>
        <strain evidence="1">cv. De Grace</strain>
        <tissue evidence="1">Leaf</tissue>
    </source>
</reference>
<sequence>FKGGGPYGQGVTRG</sequence>
<keyword id="KW-0150">Chloroplast</keyword>
<keyword id="KW-0903">Direct protein sequencing</keyword>
<keyword id="KW-0934">Plastid</keyword>
<keyword id="KW-0793">Thylakoid</keyword>
<comment type="subcellular location">
    <subcellularLocation>
        <location evidence="1">Plastid</location>
        <location evidence="1">Chloroplast thylakoid</location>
    </subcellularLocation>
</comment>
<comment type="miscellaneous">
    <text evidence="1">On the 2D-gel the determined pI of this protein is: 5.7, its MW is: 14.3 kDa.</text>
</comment>
<accession>P82322</accession>
<organism>
    <name type="scientific">Pisum sativum</name>
    <name type="common">Garden pea</name>
    <name type="synonym">Lathyrus oleraceus</name>
    <dbReference type="NCBI Taxonomy" id="3888"/>
    <lineage>
        <taxon>Eukaryota</taxon>
        <taxon>Viridiplantae</taxon>
        <taxon>Streptophyta</taxon>
        <taxon>Embryophyta</taxon>
        <taxon>Tracheophyta</taxon>
        <taxon>Spermatophyta</taxon>
        <taxon>Magnoliopsida</taxon>
        <taxon>eudicotyledons</taxon>
        <taxon>Gunneridae</taxon>
        <taxon>Pentapetalae</taxon>
        <taxon>rosids</taxon>
        <taxon>fabids</taxon>
        <taxon>Fabales</taxon>
        <taxon>Fabaceae</taxon>
        <taxon>Papilionoideae</taxon>
        <taxon>50 kb inversion clade</taxon>
        <taxon>NPAAA clade</taxon>
        <taxon>Hologalegina</taxon>
        <taxon>IRL clade</taxon>
        <taxon>Fabeae</taxon>
        <taxon>Pisum</taxon>
    </lineage>
</organism>
<proteinExistence type="evidence at protein level"/>
<evidence type="ECO:0000269" key="1">
    <source>
    </source>
</evidence>
<evidence type="ECO:0000303" key="2">
    <source>
    </source>
</evidence>
<evidence type="ECO:0000305" key="3"/>
<protein>
    <recommendedName>
        <fullName>Unknown protein from spot 103 of 2D-PAGE of thylakoid</fullName>
    </recommendedName>
</protein>
<dbReference type="GO" id="GO:0009507">
    <property type="term" value="C:chloroplast"/>
    <property type="evidence" value="ECO:0000303"/>
    <property type="project" value="UniProtKB"/>
</dbReference>
<dbReference type="GO" id="GO:0009534">
    <property type="term" value="C:chloroplast thylakoid"/>
    <property type="evidence" value="ECO:0007669"/>
    <property type="project" value="UniProtKB-SubCell"/>
</dbReference>
<dbReference type="GO" id="GO:0009579">
    <property type="term" value="C:thylakoid"/>
    <property type="evidence" value="ECO:0000303"/>
    <property type="project" value="UniProtKB"/>
</dbReference>